<name>CHM4C_HUMAN</name>
<sequence>MSKLGKFFKGGGSSKSRAAPSPQEALVRLRETEEMLGKKQEYLENRIQREIALAKKHGTQNKRAALQALKRKKRFEKQLTQIDGTLSTIEFQREALENSHTNTEVLRNMGFAAKAMKSVHENMDLNKIDDLMQEITEQQDIAQEISEAFSQRVGFGDDFDEDELMAELEELEQEELNKKMTNIRLPNVPSSSLPAQPNRKPGMSSTARRSRAASSQRAEEEDDDIKQLAAWAT</sequence>
<comment type="function">
    <text evidence="4 5 6 10 11 12">Probable core component of the endosomal sorting required for transport complex III (ESCRT-III) which is involved in multivesicular bodies (MVBs) formation and sorting of endosomal cargo proteins into MVBs. MVBs contain intraluminal vesicles (ILVs) that are generated by invagination and scission from the limiting membrane of the endosome and mostly are delivered to lysosomes enabling degradation of membrane proteins, such as stimulated growth factor receptors, lysosomal enzymes and lipids. The MVB pathway appears to require the sequential function of ESCRT-O, -I,-II and -III complexes. ESCRT-III proteins mostly dissociate from the invaginating membrane before the ILV is released. The ESCRT machinery also functions in topologically equivalent membrane fission events, such as the terminal stages of cytokinesis and the budding of enveloped viruses (HIV-1 and other lentiviruses). Key component of the cytokinesis checkpoint, a process required to delay abscission to prevent both premature resolution of intercellular chromosome bridges and accumulation of DNA damage: upon phosphorylation by AURKB, together with ZFYVE19/ANCHR, retains abscission-competent VPS4 (VPS4A and/or VPS4B) at the midbody ring until abscission checkpoint signaling is terminated at late cytokinesis. Deactivation of AURKB results in dephosphorylation of CHMP4C followed by its dissociation from ANCHR and VPS4 and subsequent abscission (PubMed:22422861, PubMed:24814515). ESCRT-III proteins are believed to mediate the necessary vesicle extrusion and/or membrane fission activities, possibly in conjunction with the AAA ATPase VPS4. Involved in HIV-1 p6- and p9-dependent virus release. CHMP4A/B/C are required for the exosomal release of SDCBP, CD63 and syndecan (PubMed:22660413).</text>
</comment>
<comment type="subunit">
    <text evidence="4 5 6 7 8 9">Probable core component of the endosomal sorting required for transport complex III (ESCRT-III). ESCRT-III components are thought to multimerize to form a flat lattice on the perimeter membrane of the endosome. Several assembly forms of ESCRT-III may exist that interact and act sequentially. Self-associates. Interacts with CHMP2A. Interacts with CHMP4A. Interacts with CHMP4B. Interacts with CHMP6. Interacts with VPS4A. Interacts with PDCD6IP; the interaction is direct.</text>
</comment>
<comment type="interaction">
    <interactant intactId="EBI-1221015">
        <id>Q96CF2</id>
    </interactant>
    <interactant intactId="EBI-310624">
        <id>Q8WUM4</id>
        <label>PDCD6IP</label>
    </interactant>
    <organismsDiffer>false</organismsDiffer>
    <experiments>3</experiments>
</comment>
<comment type="interaction">
    <interactant intactId="EBI-1221015">
        <id>Q96CF2</id>
    </interactant>
    <interactant intactId="EBI-1050865">
        <id>P40818</id>
        <label>USP8</label>
    </interactant>
    <organismsDiffer>false</organismsDiffer>
    <experiments>2</experiments>
</comment>
<comment type="subcellular location">
    <subcellularLocation>
        <location>Cytoplasm</location>
        <location>Cytosol</location>
    </subcellularLocation>
    <subcellularLocation>
        <location evidence="15">Late endosome membrane</location>
        <topology evidence="14">Peripheral membrane protein</topology>
    </subcellularLocation>
    <subcellularLocation>
        <location evidence="10">Midbody</location>
        <location evidence="10">Midbody ring</location>
    </subcellularLocation>
    <text evidence="10">Localizes to the midbody during late cytokinesis. During its recruitment, localizes initially to the midbody arms, before being directed to the central region, the midbody ring, also called Flemming body. Phosphorylation at Ser-210 by AURKB triggers localization to midbody ring.</text>
</comment>
<comment type="tissue specificity">
    <text evidence="7 8">Expressed in heart, spleen and kidney.</text>
</comment>
<comment type="domain">
    <text evidence="1">The acidic C-terminus and the basic N-terminus are thought to render the protein in a closed, soluble and inactive conformation through an autoinhibitory intramolecular interaction. The open and active conformation, which enables membrane binding and oligomerization, is achieved by interaction with other cellular binding partners, probably including other ESCRT components (By similarity).</text>
</comment>
<comment type="PTM">
    <text evidence="10">Phosphorylated at Ser-210 by AURKB during cytokinesis: together with ZFYVE19/ANCHR, phosphorylated CHMP4C retains abscission-competent VPS4 (VPS4A and/or VPS4B) at the midbody ring until abscission checkpoint signaling is terminated at late cytokinesis.</text>
</comment>
<comment type="miscellaneous">
    <text>Its overexpression strongly inhibits HIV-1 release.</text>
</comment>
<comment type="similarity">
    <text evidence="14">Belongs to the SNF7 family.</text>
</comment>
<keyword id="KW-0002">3D-structure</keyword>
<keyword id="KW-0175">Coiled coil</keyword>
<keyword id="KW-0963">Cytoplasm</keyword>
<keyword id="KW-0967">Endosome</keyword>
<keyword id="KW-0472">Membrane</keyword>
<keyword id="KW-0597">Phosphoprotein</keyword>
<keyword id="KW-0653">Protein transport</keyword>
<keyword id="KW-1267">Proteomics identification</keyword>
<keyword id="KW-1185">Reference proteome</keyword>
<keyword id="KW-0813">Transport</keyword>
<protein>
    <recommendedName>
        <fullName>Charged multivesicular body protein 4c</fullName>
    </recommendedName>
    <alternativeName>
        <fullName>Chromatin-modifying protein 4c</fullName>
        <shortName>CHMP4c</shortName>
    </alternativeName>
    <alternativeName>
        <fullName>SNF7 homolog associated with Alix 3</fullName>
    </alternativeName>
    <alternativeName>
        <fullName evidence="13">SNF7-3</fullName>
        <shortName evidence="13">hSnf7-3</shortName>
    </alternativeName>
    <alternativeName>
        <fullName>Vacuolar protein sorting-associated protein 32-3</fullName>
        <shortName>Vps32-3</shortName>
        <shortName>hVps32-3</shortName>
    </alternativeName>
</protein>
<gene>
    <name type="primary">CHMP4C</name>
    <name type="synonym">SHAX3</name>
</gene>
<feature type="chain" id="PRO_0000211495" description="Charged multivesicular body protein 4c">
    <location>
        <begin position="1"/>
        <end position="233"/>
    </location>
</feature>
<feature type="region of interest" description="Intramolecular interaction with C-terminus" evidence="1">
    <location>
        <begin position="1"/>
        <end position="153"/>
    </location>
</feature>
<feature type="region of interest" description="Disordered" evidence="3">
    <location>
        <begin position="1"/>
        <end position="24"/>
    </location>
</feature>
<feature type="region of interest" description="Intramolecular interaction with N-terminus" evidence="1">
    <location>
        <begin position="154"/>
        <end position="233"/>
    </location>
</feature>
<feature type="region of interest" description="Disordered" evidence="3">
    <location>
        <begin position="173"/>
        <end position="233"/>
    </location>
</feature>
<feature type="coiled-coil region" evidence="2">
    <location>
        <begin position="125"/>
        <end position="183"/>
    </location>
</feature>
<feature type="compositionally biased region" description="Low complexity" evidence="3">
    <location>
        <begin position="204"/>
        <end position="216"/>
    </location>
</feature>
<feature type="modified residue" description="Phosphoserine; by AURKB" evidence="10">
    <location>
        <position position="210"/>
    </location>
</feature>
<feature type="sequence variant" id="VAR_052028" description="In dbSNP:rs35094336.">
    <original>A</original>
    <variation>T</variation>
    <location>
        <position position="232"/>
    </location>
</feature>
<feature type="mutagenesis site" description="Abolishes localization to the Flemming body and ability to delay abscission." evidence="10">
    <original>S</original>
    <variation>A</variation>
    <location>
        <position position="210"/>
    </location>
</feature>
<feature type="helix" evidence="16">
    <location>
        <begin position="222"/>
        <end position="229"/>
    </location>
</feature>
<dbReference type="EMBL" id="AB120734">
    <property type="protein sequence ID" value="BAC87888.1"/>
    <property type="molecule type" value="mRNA"/>
</dbReference>
<dbReference type="EMBL" id="AY329086">
    <property type="protein sequence ID" value="AAQ91195.1"/>
    <property type="molecule type" value="mRNA"/>
</dbReference>
<dbReference type="EMBL" id="AK314873">
    <property type="protein sequence ID" value="BAG37388.1"/>
    <property type="molecule type" value="mRNA"/>
</dbReference>
<dbReference type="EMBL" id="CH471068">
    <property type="protein sequence ID" value="EAW87107.1"/>
    <property type="molecule type" value="Genomic_DNA"/>
</dbReference>
<dbReference type="EMBL" id="BC014321">
    <property type="protein sequence ID" value="AAH14321.1"/>
    <property type="molecule type" value="mRNA"/>
</dbReference>
<dbReference type="CCDS" id="CCDS6233.1"/>
<dbReference type="RefSeq" id="NP_689497.1">
    <property type="nucleotide sequence ID" value="NM_152284.4"/>
</dbReference>
<dbReference type="PDB" id="3C3R">
    <property type="method" value="X-ray"/>
    <property type="resolution" value="2.02 A"/>
    <property type="chains" value="B=221-233"/>
</dbReference>
<dbReference type="PDB" id="5MK3">
    <property type="method" value="X-ray"/>
    <property type="resolution" value="2.00 A"/>
    <property type="chains" value="E/F/G/H=216-233"/>
</dbReference>
<dbReference type="PDB" id="5V3R">
    <property type="method" value="X-ray"/>
    <property type="resolution" value="1.91 A"/>
    <property type="chains" value="B=216-233"/>
</dbReference>
<dbReference type="PDB" id="5WA1">
    <property type="method" value="X-ray"/>
    <property type="resolution" value="1.87 A"/>
    <property type="chains" value="B=216-233"/>
</dbReference>
<dbReference type="PDBsum" id="3C3R"/>
<dbReference type="PDBsum" id="5MK3"/>
<dbReference type="PDBsum" id="5V3R"/>
<dbReference type="PDBsum" id="5WA1"/>
<dbReference type="SMR" id="Q96CF2"/>
<dbReference type="BioGRID" id="124946">
    <property type="interactions" value="687"/>
</dbReference>
<dbReference type="ComplexPortal" id="CPX-329">
    <property type="entry name" value="ESCRT-III complex"/>
</dbReference>
<dbReference type="CORUM" id="Q96CF2"/>
<dbReference type="DIP" id="DIP-38342N"/>
<dbReference type="FunCoup" id="Q96CF2">
    <property type="interactions" value="984"/>
</dbReference>
<dbReference type="IntAct" id="Q96CF2">
    <property type="interactions" value="17"/>
</dbReference>
<dbReference type="MINT" id="Q96CF2"/>
<dbReference type="STRING" id="9606.ENSP00000297265"/>
<dbReference type="GlyGen" id="Q96CF2">
    <property type="glycosylation" value="1 site, 1 O-linked glycan (1 site)"/>
</dbReference>
<dbReference type="iPTMnet" id="Q96CF2"/>
<dbReference type="PhosphoSitePlus" id="Q96CF2"/>
<dbReference type="BioMuta" id="CHMP4C"/>
<dbReference type="DMDM" id="73917755"/>
<dbReference type="jPOST" id="Q96CF2"/>
<dbReference type="MassIVE" id="Q96CF2"/>
<dbReference type="PaxDb" id="9606-ENSP00000297265"/>
<dbReference type="PeptideAtlas" id="Q96CF2"/>
<dbReference type="ProteomicsDB" id="76183"/>
<dbReference type="Pumba" id="Q96CF2"/>
<dbReference type="Antibodypedia" id="12567">
    <property type="antibodies" value="71 antibodies from 17 providers"/>
</dbReference>
<dbReference type="DNASU" id="92421"/>
<dbReference type="Ensembl" id="ENST00000297265.5">
    <property type="protein sequence ID" value="ENSP00000297265.4"/>
    <property type="gene ID" value="ENSG00000164695.5"/>
</dbReference>
<dbReference type="GeneID" id="92421"/>
<dbReference type="KEGG" id="hsa:92421"/>
<dbReference type="MANE-Select" id="ENST00000297265.5">
    <property type="protein sequence ID" value="ENSP00000297265.4"/>
    <property type="RefSeq nucleotide sequence ID" value="NM_152284.4"/>
    <property type="RefSeq protein sequence ID" value="NP_689497.1"/>
</dbReference>
<dbReference type="UCSC" id="uc003ycl.4">
    <property type="organism name" value="human"/>
</dbReference>
<dbReference type="AGR" id="HGNC:30599"/>
<dbReference type="CTD" id="92421"/>
<dbReference type="DisGeNET" id="92421"/>
<dbReference type="GeneCards" id="CHMP4C"/>
<dbReference type="HGNC" id="HGNC:30599">
    <property type="gene designation" value="CHMP4C"/>
</dbReference>
<dbReference type="HPA" id="ENSG00000164695">
    <property type="expression patterns" value="Tissue enhanced (intestine)"/>
</dbReference>
<dbReference type="MIM" id="610899">
    <property type="type" value="gene"/>
</dbReference>
<dbReference type="neXtProt" id="NX_Q96CF2"/>
<dbReference type="OpenTargets" id="ENSG00000164695"/>
<dbReference type="PharmGKB" id="PA142672113"/>
<dbReference type="VEuPathDB" id="HostDB:ENSG00000164695"/>
<dbReference type="eggNOG" id="KOG1656">
    <property type="taxonomic scope" value="Eukaryota"/>
</dbReference>
<dbReference type="GeneTree" id="ENSGT00940000159257"/>
<dbReference type="HOGENOM" id="CLU_071097_0_1_1"/>
<dbReference type="InParanoid" id="Q96CF2"/>
<dbReference type="OMA" id="DKIDDMM"/>
<dbReference type="OrthoDB" id="5592979at2759"/>
<dbReference type="PAN-GO" id="Q96CF2">
    <property type="GO annotations" value="5 GO annotations based on evolutionary models"/>
</dbReference>
<dbReference type="PhylomeDB" id="Q96CF2"/>
<dbReference type="TreeFam" id="TF314269"/>
<dbReference type="PathwayCommons" id="Q96CF2"/>
<dbReference type="Reactome" id="R-HSA-162588">
    <property type="pathway name" value="Budding and maturation of HIV virion"/>
</dbReference>
<dbReference type="Reactome" id="R-HSA-1632852">
    <property type="pathway name" value="Macroautophagy"/>
</dbReference>
<dbReference type="Reactome" id="R-HSA-5620971">
    <property type="pathway name" value="Pyroptosis"/>
</dbReference>
<dbReference type="Reactome" id="R-HSA-917729">
    <property type="pathway name" value="Endosomal Sorting Complex Required For Transport (ESCRT)"/>
</dbReference>
<dbReference type="Reactome" id="R-HSA-9610379">
    <property type="pathway name" value="HCMV Late Events"/>
</dbReference>
<dbReference type="Reactome" id="R-HSA-9615710">
    <property type="pathway name" value="Late endosomal microautophagy"/>
</dbReference>
<dbReference type="Reactome" id="R-HSA-9668328">
    <property type="pathway name" value="Sealing of the nuclear envelope (NE) by ESCRT-III"/>
</dbReference>
<dbReference type="Reactome" id="R-HSA-9679504">
    <property type="pathway name" value="Translation of Replicase and Assembly of the Replication Transcription Complex"/>
</dbReference>
<dbReference type="Reactome" id="R-HSA-9694676">
    <property type="pathway name" value="Translation of Replicase and Assembly of the Replication Transcription Complex"/>
</dbReference>
<dbReference type="SignaLink" id="Q96CF2"/>
<dbReference type="SIGNOR" id="Q96CF2"/>
<dbReference type="BioGRID-ORCS" id="92421">
    <property type="hits" value="17 hits in 1155 CRISPR screens"/>
</dbReference>
<dbReference type="EvolutionaryTrace" id="Q96CF2"/>
<dbReference type="GeneWiki" id="CHMP4C"/>
<dbReference type="GenomeRNAi" id="92421"/>
<dbReference type="Pharos" id="Q96CF2">
    <property type="development level" value="Tbio"/>
</dbReference>
<dbReference type="PRO" id="PR:Q96CF2"/>
<dbReference type="Proteomes" id="UP000005640">
    <property type="component" value="Chromosome 8"/>
</dbReference>
<dbReference type="RNAct" id="Q96CF2">
    <property type="molecule type" value="protein"/>
</dbReference>
<dbReference type="Bgee" id="ENSG00000164695">
    <property type="expression patterns" value="Expressed in amniotic fluid and 138 other cell types or tissues"/>
</dbReference>
<dbReference type="GO" id="GO:1904930">
    <property type="term" value="C:amphisome membrane"/>
    <property type="evidence" value="ECO:0000314"/>
    <property type="project" value="ComplexPortal"/>
</dbReference>
<dbReference type="GO" id="GO:0000421">
    <property type="term" value="C:autophagosome membrane"/>
    <property type="evidence" value="ECO:0000314"/>
    <property type="project" value="ComplexPortal"/>
</dbReference>
<dbReference type="GO" id="GO:0009898">
    <property type="term" value="C:cytoplasmic side of plasma membrane"/>
    <property type="evidence" value="ECO:0000318"/>
    <property type="project" value="GO_Central"/>
</dbReference>
<dbReference type="GO" id="GO:0005829">
    <property type="term" value="C:cytosol"/>
    <property type="evidence" value="ECO:0000304"/>
    <property type="project" value="Reactome"/>
</dbReference>
<dbReference type="GO" id="GO:0000815">
    <property type="term" value="C:ESCRT III complex"/>
    <property type="evidence" value="ECO:0000318"/>
    <property type="project" value="GO_Central"/>
</dbReference>
<dbReference type="GO" id="GO:0090543">
    <property type="term" value="C:Flemming body"/>
    <property type="evidence" value="ECO:0000314"/>
    <property type="project" value="UniProtKB"/>
</dbReference>
<dbReference type="GO" id="GO:0000776">
    <property type="term" value="C:kinetochore"/>
    <property type="evidence" value="ECO:0000314"/>
    <property type="project" value="ComplexPortal"/>
</dbReference>
<dbReference type="GO" id="GO:0005828">
    <property type="term" value="C:kinetochore microtubule"/>
    <property type="evidence" value="ECO:0000314"/>
    <property type="project" value="ComplexPortal"/>
</dbReference>
<dbReference type="GO" id="GO:0005765">
    <property type="term" value="C:lysosomal membrane"/>
    <property type="evidence" value="ECO:0000314"/>
    <property type="project" value="ComplexPortal"/>
</dbReference>
<dbReference type="GO" id="GO:0030496">
    <property type="term" value="C:midbody"/>
    <property type="evidence" value="ECO:0000314"/>
    <property type="project" value="FlyBase"/>
</dbReference>
<dbReference type="GO" id="GO:0005771">
    <property type="term" value="C:multivesicular body"/>
    <property type="evidence" value="ECO:0000318"/>
    <property type="project" value="GO_Central"/>
</dbReference>
<dbReference type="GO" id="GO:0032585">
    <property type="term" value="C:multivesicular body membrane"/>
    <property type="evidence" value="ECO:0000314"/>
    <property type="project" value="ComplexPortal"/>
</dbReference>
<dbReference type="GO" id="GO:0005643">
    <property type="term" value="C:nuclear pore"/>
    <property type="evidence" value="ECO:0000314"/>
    <property type="project" value="ComplexPortal"/>
</dbReference>
<dbReference type="GO" id="GO:0005886">
    <property type="term" value="C:plasma membrane"/>
    <property type="evidence" value="ECO:0000314"/>
    <property type="project" value="ComplexPortal"/>
</dbReference>
<dbReference type="GO" id="GO:0042803">
    <property type="term" value="F:protein homodimerization activity"/>
    <property type="evidence" value="ECO:0000353"/>
    <property type="project" value="UniProtKB"/>
</dbReference>
<dbReference type="GO" id="GO:0097352">
    <property type="term" value="P:autophagosome maturation"/>
    <property type="evidence" value="ECO:0000315"/>
    <property type="project" value="ComplexPortal"/>
</dbReference>
<dbReference type="GO" id="GO:0006914">
    <property type="term" value="P:autophagy"/>
    <property type="evidence" value="ECO:0000315"/>
    <property type="project" value="ComplexPortal"/>
</dbReference>
<dbReference type="GO" id="GO:1902774">
    <property type="term" value="P:late endosome to lysosome transport"/>
    <property type="evidence" value="ECO:0000315"/>
    <property type="project" value="ComplexPortal"/>
</dbReference>
<dbReference type="GO" id="GO:0032511">
    <property type="term" value="P:late endosome to vacuole transport via multivesicular body sorting pathway"/>
    <property type="evidence" value="ECO:0000318"/>
    <property type="project" value="GO_Central"/>
</dbReference>
<dbReference type="GO" id="GO:0016236">
    <property type="term" value="P:macroautophagy"/>
    <property type="evidence" value="ECO:0000304"/>
    <property type="project" value="ParkinsonsUK-UCL"/>
</dbReference>
<dbReference type="GO" id="GO:0090148">
    <property type="term" value="P:membrane fission"/>
    <property type="evidence" value="ECO:0000303"/>
    <property type="project" value="ComplexPortal"/>
</dbReference>
<dbReference type="GO" id="GO:0061952">
    <property type="term" value="P:midbody abscission"/>
    <property type="evidence" value="ECO:0000315"/>
    <property type="project" value="UniProtKB"/>
</dbReference>
<dbReference type="GO" id="GO:0044878">
    <property type="term" value="P:mitotic cytokinesis checkpoint signaling"/>
    <property type="evidence" value="ECO:0000315"/>
    <property type="project" value="UniProtKB"/>
</dbReference>
<dbReference type="GO" id="GO:0007080">
    <property type="term" value="P:mitotic metaphase chromosome alignment"/>
    <property type="evidence" value="ECO:0000315"/>
    <property type="project" value="UniProtKB"/>
</dbReference>
<dbReference type="GO" id="GO:0036258">
    <property type="term" value="P:multivesicular body assembly"/>
    <property type="evidence" value="ECO:0000304"/>
    <property type="project" value="ParkinsonsUK-UCL"/>
</dbReference>
<dbReference type="GO" id="GO:0071985">
    <property type="term" value="P:multivesicular body sorting pathway"/>
    <property type="evidence" value="ECO:0000314"/>
    <property type="project" value="ComplexPortal"/>
</dbReference>
<dbReference type="GO" id="GO:0061763">
    <property type="term" value="P:multivesicular body-lysosome fusion"/>
    <property type="evidence" value="ECO:0000303"/>
    <property type="project" value="ComplexPortal"/>
</dbReference>
<dbReference type="GO" id="GO:0032466">
    <property type="term" value="P:negative regulation of cytokinesis"/>
    <property type="evidence" value="ECO:0000315"/>
    <property type="project" value="UniProtKB"/>
</dbReference>
<dbReference type="GO" id="GO:0031468">
    <property type="term" value="P:nuclear membrane reassembly"/>
    <property type="evidence" value="ECO:0000315"/>
    <property type="project" value="ComplexPortal"/>
</dbReference>
<dbReference type="GO" id="GO:0006997">
    <property type="term" value="P:nucleus organization"/>
    <property type="evidence" value="ECO:0000315"/>
    <property type="project" value="UniProtKB"/>
</dbReference>
<dbReference type="GO" id="GO:0001778">
    <property type="term" value="P:plasma membrane repair"/>
    <property type="evidence" value="ECO:0000314"/>
    <property type="project" value="ComplexPortal"/>
</dbReference>
<dbReference type="GO" id="GO:0015031">
    <property type="term" value="P:protein transport"/>
    <property type="evidence" value="ECO:0007669"/>
    <property type="project" value="UniProtKB-KW"/>
</dbReference>
<dbReference type="GO" id="GO:0010824">
    <property type="term" value="P:regulation of centrosome duplication"/>
    <property type="evidence" value="ECO:0000315"/>
    <property type="project" value="UniProtKB"/>
</dbReference>
<dbReference type="GO" id="GO:1901673">
    <property type="term" value="P:regulation of mitotic spindle assembly"/>
    <property type="evidence" value="ECO:0000315"/>
    <property type="project" value="UniProtKB"/>
</dbReference>
<dbReference type="GO" id="GO:0043162">
    <property type="term" value="P:ubiquitin-dependent protein catabolic process via the multivesicular body sorting pathway"/>
    <property type="evidence" value="ECO:0000314"/>
    <property type="project" value="ComplexPortal"/>
</dbReference>
<dbReference type="GO" id="GO:0090611">
    <property type="term" value="P:ubiquitin-independent protein catabolic process via the multivesicular body sorting pathway"/>
    <property type="evidence" value="ECO:0000315"/>
    <property type="project" value="UniProtKB"/>
</dbReference>
<dbReference type="GO" id="GO:0006900">
    <property type="term" value="P:vesicle budding from membrane"/>
    <property type="evidence" value="ECO:0000318"/>
    <property type="project" value="GO_Central"/>
</dbReference>
<dbReference type="GO" id="GO:0051469">
    <property type="term" value="P:vesicle fusion with vacuole"/>
    <property type="evidence" value="ECO:0000303"/>
    <property type="project" value="ComplexPortal"/>
</dbReference>
<dbReference type="GO" id="GO:0046761">
    <property type="term" value="P:viral budding from plasma membrane"/>
    <property type="evidence" value="ECO:0000314"/>
    <property type="project" value="ComplexPortal"/>
</dbReference>
<dbReference type="GO" id="GO:0039702">
    <property type="term" value="P:viral budding via host ESCRT complex"/>
    <property type="evidence" value="ECO:0000314"/>
    <property type="project" value="ComplexPortal"/>
</dbReference>
<dbReference type="FunFam" id="1.10.287.1060:FF:000001">
    <property type="entry name" value="Charged multivesicular body protein 4b"/>
    <property type="match status" value="1"/>
</dbReference>
<dbReference type="Gene3D" id="6.10.250.1710">
    <property type="match status" value="1"/>
</dbReference>
<dbReference type="Gene3D" id="1.10.287.1060">
    <property type="entry name" value="ESAT-6-like"/>
    <property type="match status" value="1"/>
</dbReference>
<dbReference type="InterPro" id="IPR005024">
    <property type="entry name" value="Snf7_fam"/>
</dbReference>
<dbReference type="PANTHER" id="PTHR22761">
    <property type="entry name" value="CHARGED MULTIVESICULAR BODY PROTEIN"/>
    <property type="match status" value="1"/>
</dbReference>
<dbReference type="PANTHER" id="PTHR22761:SF77">
    <property type="entry name" value="CHARGED MULTIVESICULAR BODY PROTEIN 4C"/>
    <property type="match status" value="1"/>
</dbReference>
<dbReference type="Pfam" id="PF03357">
    <property type="entry name" value="Snf7"/>
    <property type="match status" value="1"/>
</dbReference>
<accession>Q96CF2</accession>
<accession>B2RBZ1</accession>
<organism>
    <name type="scientific">Homo sapiens</name>
    <name type="common">Human</name>
    <dbReference type="NCBI Taxonomy" id="9606"/>
    <lineage>
        <taxon>Eukaryota</taxon>
        <taxon>Metazoa</taxon>
        <taxon>Chordata</taxon>
        <taxon>Craniata</taxon>
        <taxon>Vertebrata</taxon>
        <taxon>Euteleostomi</taxon>
        <taxon>Mammalia</taxon>
        <taxon>Eutheria</taxon>
        <taxon>Euarchontoglires</taxon>
        <taxon>Primates</taxon>
        <taxon>Haplorrhini</taxon>
        <taxon>Catarrhini</taxon>
        <taxon>Hominidae</taxon>
        <taxon>Homo</taxon>
    </lineage>
</organism>
<proteinExistence type="evidence at protein level"/>
<reference key="1">
    <citation type="journal article" date="2004" name="Arch. Biochem. Biophys.">
        <title>CHMP4b is a major binding partner of the ALG-2-interacting protein Alix among the three CHMP4 isoforms.</title>
        <authorList>
            <person name="Katoh K."/>
            <person name="Shibata H."/>
            <person name="Hatta K."/>
            <person name="Maki M."/>
        </authorList>
    </citation>
    <scope>NUCLEOTIDE SEQUENCE [MRNA]</scope>
    <scope>TISSUE SPECIFICITY</scope>
    <scope>INTERACTION WITH PDCD6IP</scope>
</reference>
<reference key="2">
    <citation type="journal article" date="2004" name="Biochem. J.">
        <title>Structure and function of human Vps20 and Snf7 proteins.</title>
        <authorList>
            <person name="Peck J.W."/>
            <person name="Bowden E.T."/>
            <person name="Burbelo P.D."/>
        </authorList>
    </citation>
    <scope>NUCLEOTIDE SEQUENCE [MRNA]</scope>
    <scope>SUBCELLULAR LOCATION</scope>
    <scope>TISSUE SPECIFICITY</scope>
    <scope>INTERACTION WITH PDCD6IP</scope>
</reference>
<reference key="3">
    <citation type="journal article" date="2004" name="Nat. Genet.">
        <title>Complete sequencing and characterization of 21,243 full-length human cDNAs.</title>
        <authorList>
            <person name="Ota T."/>
            <person name="Suzuki Y."/>
            <person name="Nishikawa T."/>
            <person name="Otsuki T."/>
            <person name="Sugiyama T."/>
            <person name="Irie R."/>
            <person name="Wakamatsu A."/>
            <person name="Hayashi K."/>
            <person name="Sato H."/>
            <person name="Nagai K."/>
            <person name="Kimura K."/>
            <person name="Makita H."/>
            <person name="Sekine M."/>
            <person name="Obayashi M."/>
            <person name="Nishi T."/>
            <person name="Shibahara T."/>
            <person name="Tanaka T."/>
            <person name="Ishii S."/>
            <person name="Yamamoto J."/>
            <person name="Saito K."/>
            <person name="Kawai Y."/>
            <person name="Isono Y."/>
            <person name="Nakamura Y."/>
            <person name="Nagahari K."/>
            <person name="Murakami K."/>
            <person name="Yasuda T."/>
            <person name="Iwayanagi T."/>
            <person name="Wagatsuma M."/>
            <person name="Shiratori A."/>
            <person name="Sudo H."/>
            <person name="Hosoiri T."/>
            <person name="Kaku Y."/>
            <person name="Kodaira H."/>
            <person name="Kondo H."/>
            <person name="Sugawara M."/>
            <person name="Takahashi M."/>
            <person name="Kanda K."/>
            <person name="Yokoi T."/>
            <person name="Furuya T."/>
            <person name="Kikkawa E."/>
            <person name="Omura Y."/>
            <person name="Abe K."/>
            <person name="Kamihara K."/>
            <person name="Katsuta N."/>
            <person name="Sato K."/>
            <person name="Tanikawa M."/>
            <person name="Yamazaki M."/>
            <person name="Ninomiya K."/>
            <person name="Ishibashi T."/>
            <person name="Yamashita H."/>
            <person name="Murakawa K."/>
            <person name="Fujimori K."/>
            <person name="Tanai H."/>
            <person name="Kimata M."/>
            <person name="Watanabe M."/>
            <person name="Hiraoka S."/>
            <person name="Chiba Y."/>
            <person name="Ishida S."/>
            <person name="Ono Y."/>
            <person name="Takiguchi S."/>
            <person name="Watanabe S."/>
            <person name="Yosida M."/>
            <person name="Hotuta T."/>
            <person name="Kusano J."/>
            <person name="Kanehori K."/>
            <person name="Takahashi-Fujii A."/>
            <person name="Hara H."/>
            <person name="Tanase T.-O."/>
            <person name="Nomura Y."/>
            <person name="Togiya S."/>
            <person name="Komai F."/>
            <person name="Hara R."/>
            <person name="Takeuchi K."/>
            <person name="Arita M."/>
            <person name="Imose N."/>
            <person name="Musashino K."/>
            <person name="Yuuki H."/>
            <person name="Oshima A."/>
            <person name="Sasaki N."/>
            <person name="Aotsuka S."/>
            <person name="Yoshikawa Y."/>
            <person name="Matsunawa H."/>
            <person name="Ichihara T."/>
            <person name="Shiohata N."/>
            <person name="Sano S."/>
            <person name="Moriya S."/>
            <person name="Momiyama H."/>
            <person name="Satoh N."/>
            <person name="Takami S."/>
            <person name="Terashima Y."/>
            <person name="Suzuki O."/>
            <person name="Nakagawa S."/>
            <person name="Senoh A."/>
            <person name="Mizoguchi H."/>
            <person name="Goto Y."/>
            <person name="Shimizu F."/>
            <person name="Wakebe H."/>
            <person name="Hishigaki H."/>
            <person name="Watanabe T."/>
            <person name="Sugiyama A."/>
            <person name="Takemoto M."/>
            <person name="Kawakami B."/>
            <person name="Yamazaki M."/>
            <person name="Watanabe K."/>
            <person name="Kumagai A."/>
            <person name="Itakura S."/>
            <person name="Fukuzumi Y."/>
            <person name="Fujimori Y."/>
            <person name="Komiyama M."/>
            <person name="Tashiro H."/>
            <person name="Tanigami A."/>
            <person name="Fujiwara T."/>
            <person name="Ono T."/>
            <person name="Yamada K."/>
            <person name="Fujii Y."/>
            <person name="Ozaki K."/>
            <person name="Hirao M."/>
            <person name="Ohmori Y."/>
            <person name="Kawabata A."/>
            <person name="Hikiji T."/>
            <person name="Kobatake N."/>
            <person name="Inagaki H."/>
            <person name="Ikema Y."/>
            <person name="Okamoto S."/>
            <person name="Okitani R."/>
            <person name="Kawakami T."/>
            <person name="Noguchi S."/>
            <person name="Itoh T."/>
            <person name="Shigeta K."/>
            <person name="Senba T."/>
            <person name="Matsumura K."/>
            <person name="Nakajima Y."/>
            <person name="Mizuno T."/>
            <person name="Morinaga M."/>
            <person name="Sasaki M."/>
            <person name="Togashi T."/>
            <person name="Oyama M."/>
            <person name="Hata H."/>
            <person name="Watanabe M."/>
            <person name="Komatsu T."/>
            <person name="Mizushima-Sugano J."/>
            <person name="Satoh T."/>
            <person name="Shirai Y."/>
            <person name="Takahashi Y."/>
            <person name="Nakagawa K."/>
            <person name="Okumura K."/>
            <person name="Nagase T."/>
            <person name="Nomura N."/>
            <person name="Kikuchi H."/>
            <person name="Masuho Y."/>
            <person name="Yamashita R."/>
            <person name="Nakai K."/>
            <person name="Yada T."/>
            <person name="Nakamura Y."/>
            <person name="Ohara O."/>
            <person name="Isogai T."/>
            <person name="Sugano S."/>
        </authorList>
    </citation>
    <scope>NUCLEOTIDE SEQUENCE [LARGE SCALE MRNA]</scope>
    <source>
        <tissue>Small intestine</tissue>
    </source>
</reference>
<reference key="4">
    <citation type="submission" date="2005-07" db="EMBL/GenBank/DDBJ databases">
        <authorList>
            <person name="Mural R.J."/>
            <person name="Istrail S."/>
            <person name="Sutton G.G."/>
            <person name="Florea L."/>
            <person name="Halpern A.L."/>
            <person name="Mobarry C.M."/>
            <person name="Lippert R."/>
            <person name="Walenz B."/>
            <person name="Shatkay H."/>
            <person name="Dew I."/>
            <person name="Miller J.R."/>
            <person name="Flanigan M.J."/>
            <person name="Edwards N.J."/>
            <person name="Bolanos R."/>
            <person name="Fasulo D."/>
            <person name="Halldorsson B.V."/>
            <person name="Hannenhalli S."/>
            <person name="Turner R."/>
            <person name="Yooseph S."/>
            <person name="Lu F."/>
            <person name="Nusskern D.R."/>
            <person name="Shue B.C."/>
            <person name="Zheng X.H."/>
            <person name="Zhong F."/>
            <person name="Delcher A.L."/>
            <person name="Huson D.H."/>
            <person name="Kravitz S.A."/>
            <person name="Mouchard L."/>
            <person name="Reinert K."/>
            <person name="Remington K.A."/>
            <person name="Clark A.G."/>
            <person name="Waterman M.S."/>
            <person name="Eichler E.E."/>
            <person name="Adams M.D."/>
            <person name="Hunkapiller M.W."/>
            <person name="Myers E.W."/>
            <person name="Venter J.C."/>
        </authorList>
    </citation>
    <scope>NUCLEOTIDE SEQUENCE [LARGE SCALE GENOMIC DNA]</scope>
</reference>
<reference key="5">
    <citation type="journal article" date="2004" name="Genome Res.">
        <title>The status, quality, and expansion of the NIH full-length cDNA project: the Mammalian Gene Collection (MGC).</title>
        <authorList>
            <consortium name="The MGC Project Team"/>
        </authorList>
    </citation>
    <scope>NUCLEOTIDE SEQUENCE [LARGE SCALE MRNA]</scope>
    <source>
        <tissue>Kidney</tissue>
    </source>
</reference>
<reference key="6">
    <citation type="journal article" date="2003" name="Cell">
        <title>AIP1/ALIX is a binding partner for HIV-1 p6 and EIAV p9 functioning in virus budding.</title>
        <authorList>
            <person name="Strack B."/>
            <person name="Calistri A."/>
            <person name="Craig S."/>
            <person name="Popova E."/>
            <person name="Goettlinger H.G."/>
        </authorList>
    </citation>
    <scope>FUNCTION IN HIV-1 BUDDING</scope>
    <scope>INTERACTION WITH PDCD6IP</scope>
</reference>
<reference key="7">
    <citation type="journal article" date="2003" name="Cell">
        <title>The protein network of HIV budding.</title>
        <authorList>
            <person name="von Schwedler U.K."/>
            <person name="Stuchell M."/>
            <person name="Mueller B."/>
            <person name="Ward D.M."/>
            <person name="Chung H.-Y."/>
            <person name="Morita E."/>
            <person name="Wang H.E."/>
            <person name="Davis T."/>
            <person name="He G.P."/>
            <person name="Cimbora D.M."/>
            <person name="Scott A."/>
            <person name="Kraeusslich H.-G."/>
            <person name="Kaplan J."/>
            <person name="Morham S.G."/>
            <person name="Sundquist W.I."/>
        </authorList>
    </citation>
    <scope>FUNCTION IN HIV-1 BUDDING</scope>
    <scope>SELF-ASSOCIATION</scope>
    <scope>INTERACTION WITH CHMPC4A; CHMPC4B; VPS4A AND PDCD6IP</scope>
</reference>
<reference key="8">
    <citation type="journal article" date="2003" name="Proc. Natl. Acad. Sci. U.S.A.">
        <title>Divergent retroviral late-budding domains recruit vacuolar protein sorting factors by using alternative adaptor proteins.</title>
        <authorList>
            <person name="Martin-Serrano J."/>
            <person name="Yarovoy A."/>
            <person name="Perez-Caballero D."/>
            <person name="Bieniasz P.D."/>
        </authorList>
    </citation>
    <scope>FUNCTION IN HIV-1 BUDDING</scope>
    <scope>SELF-ASSOCIATION</scope>
    <scope>INTERACTION WITH CHMP2A; CHMP4A; CHMP4B; CHMP6 AND PDCD6IP</scope>
</reference>
<reference key="9">
    <citation type="journal article" date="2003" name="Proc. Natl. Acad. Sci. U.S.A.">
        <authorList>
            <person name="Martin-Serrano J."/>
            <person name="Yarovoy A."/>
            <person name="Perez-Caballero D."/>
            <person name="Bieniasz P.D."/>
        </authorList>
    </citation>
    <scope>ERRATUM OF PUBMED:14519844</scope>
</reference>
<reference key="10">
    <citation type="journal article" date="2012" name="Nat. Cell Biol.">
        <title>Syndecan-syntenin-ALIX regulates the biogenesis of exosomes.</title>
        <authorList>
            <person name="Baietti M.F."/>
            <person name="Zhang Z."/>
            <person name="Mortier E."/>
            <person name="Melchior A."/>
            <person name="Degeest G."/>
            <person name="Geeraerts A."/>
            <person name="Ivarsson Y."/>
            <person name="Depoortere F."/>
            <person name="Coomans C."/>
            <person name="Vermeiren E."/>
            <person name="Zimmermann P."/>
            <person name="David G."/>
        </authorList>
    </citation>
    <scope>FUNCTION</scope>
</reference>
<reference key="11">
    <citation type="journal article" date="2012" name="Science">
        <title>ESCRT-III governs the Aurora B-mediated abscission checkpoint through CHMP4C.</title>
        <authorList>
            <person name="Carlton J.G."/>
            <person name="Caballe A."/>
            <person name="Agromayor M."/>
            <person name="Kloc M."/>
            <person name="Martin-Serrano J."/>
        </authorList>
    </citation>
    <scope>FUNCTION</scope>
    <scope>SUBCELLULAR LOCATION</scope>
    <scope>PHOSPHORYLATION AT SER-210</scope>
    <scope>MUTAGENESIS OF SER-210</scope>
</reference>
<reference key="12">
    <citation type="journal article" date="2014" name="Nat. Cell Biol.">
        <title>ANCHR mediates Aurora-B-dependent abscission checkpoint control through retention of VPS4.</title>
        <authorList>
            <person name="Thoresen S.B."/>
            <person name="Campsteijn C."/>
            <person name="Vietri M."/>
            <person name="Schink K.O."/>
            <person name="Liestoel K."/>
            <person name="Andersen J.S."/>
            <person name="Raiborg C."/>
            <person name="Stenmark H."/>
        </authorList>
    </citation>
    <scope>FUNCTION</scope>
</reference>
<reference key="13">
    <citation type="journal article" date="2008" name="Proc. Natl. Acad. Sci. U.S.A.">
        <title>ALIX-CHMP4 interactions in the human ESCRT pathway.</title>
        <authorList>
            <person name="McCullough J."/>
            <person name="Fisher R.D."/>
            <person name="Whitby F.G."/>
            <person name="Sundquist W.I."/>
            <person name="Hill C.P."/>
        </authorList>
    </citation>
    <scope>X-RAY CRYSTALLOGRAPHY (2.02 ANGSTROMS) OF 221-233 IN COMPLEX WITH PDCD6IP</scope>
</reference>
<evidence type="ECO:0000250" key="1"/>
<evidence type="ECO:0000255" key="2"/>
<evidence type="ECO:0000256" key="3">
    <source>
        <dbReference type="SAM" id="MobiDB-lite"/>
    </source>
</evidence>
<evidence type="ECO:0000269" key="4">
    <source>
    </source>
</evidence>
<evidence type="ECO:0000269" key="5">
    <source>
    </source>
</evidence>
<evidence type="ECO:0000269" key="6">
    <source>
    </source>
</evidence>
<evidence type="ECO:0000269" key="7">
    <source>
    </source>
</evidence>
<evidence type="ECO:0000269" key="8">
    <source>
    </source>
</evidence>
<evidence type="ECO:0000269" key="9">
    <source>
    </source>
</evidence>
<evidence type="ECO:0000269" key="10">
    <source>
    </source>
</evidence>
<evidence type="ECO:0000269" key="11">
    <source>
    </source>
</evidence>
<evidence type="ECO:0000269" key="12">
    <source>
    </source>
</evidence>
<evidence type="ECO:0000303" key="13">
    <source>
    </source>
</evidence>
<evidence type="ECO:0000305" key="14"/>
<evidence type="ECO:0000305" key="15">
    <source>
    </source>
</evidence>
<evidence type="ECO:0007829" key="16">
    <source>
        <dbReference type="PDB" id="5WA1"/>
    </source>
</evidence>